<feature type="chain" id="PRO_0000345916" description="tRNA modification GTPase MnmE">
    <location>
        <begin position="1"/>
        <end position="460"/>
    </location>
</feature>
<feature type="domain" description="TrmE-type G">
    <location>
        <begin position="221"/>
        <end position="381"/>
    </location>
</feature>
<feature type="binding site" evidence="1">
    <location>
        <position position="25"/>
    </location>
    <ligand>
        <name>(6S)-5-formyl-5,6,7,8-tetrahydrofolate</name>
        <dbReference type="ChEBI" id="CHEBI:57457"/>
    </ligand>
</feature>
<feature type="binding site" evidence="1">
    <location>
        <position position="87"/>
    </location>
    <ligand>
        <name>(6S)-5-formyl-5,6,7,8-tetrahydrofolate</name>
        <dbReference type="ChEBI" id="CHEBI:57457"/>
    </ligand>
</feature>
<feature type="binding site" evidence="1">
    <location>
        <position position="126"/>
    </location>
    <ligand>
        <name>(6S)-5-formyl-5,6,7,8-tetrahydrofolate</name>
        <dbReference type="ChEBI" id="CHEBI:57457"/>
    </ligand>
</feature>
<feature type="binding site" evidence="1">
    <location>
        <begin position="231"/>
        <end position="236"/>
    </location>
    <ligand>
        <name>GTP</name>
        <dbReference type="ChEBI" id="CHEBI:37565"/>
    </ligand>
</feature>
<feature type="binding site" evidence="1">
    <location>
        <position position="231"/>
    </location>
    <ligand>
        <name>K(+)</name>
        <dbReference type="ChEBI" id="CHEBI:29103"/>
    </ligand>
</feature>
<feature type="binding site" evidence="1">
    <location>
        <position position="235"/>
    </location>
    <ligand>
        <name>Mg(2+)</name>
        <dbReference type="ChEBI" id="CHEBI:18420"/>
    </ligand>
</feature>
<feature type="binding site" evidence="1">
    <location>
        <begin position="250"/>
        <end position="256"/>
    </location>
    <ligand>
        <name>GTP</name>
        <dbReference type="ChEBI" id="CHEBI:37565"/>
    </ligand>
</feature>
<feature type="binding site" evidence="1">
    <location>
        <position position="250"/>
    </location>
    <ligand>
        <name>K(+)</name>
        <dbReference type="ChEBI" id="CHEBI:29103"/>
    </ligand>
</feature>
<feature type="binding site" evidence="1">
    <location>
        <position position="252"/>
    </location>
    <ligand>
        <name>K(+)</name>
        <dbReference type="ChEBI" id="CHEBI:29103"/>
    </ligand>
</feature>
<feature type="binding site" evidence="1">
    <location>
        <position position="255"/>
    </location>
    <ligand>
        <name>K(+)</name>
        <dbReference type="ChEBI" id="CHEBI:29103"/>
    </ligand>
</feature>
<feature type="binding site" evidence="1">
    <location>
        <position position="256"/>
    </location>
    <ligand>
        <name>Mg(2+)</name>
        <dbReference type="ChEBI" id="CHEBI:18420"/>
    </ligand>
</feature>
<feature type="binding site" evidence="1">
    <location>
        <begin position="275"/>
        <end position="278"/>
    </location>
    <ligand>
        <name>GTP</name>
        <dbReference type="ChEBI" id="CHEBI:37565"/>
    </ligand>
</feature>
<feature type="binding site" evidence="1">
    <location>
        <position position="460"/>
    </location>
    <ligand>
        <name>(6S)-5-formyl-5,6,7,8-tetrahydrofolate</name>
        <dbReference type="ChEBI" id="CHEBI:57457"/>
    </ligand>
</feature>
<reference key="1">
    <citation type="submission" date="2008-02" db="EMBL/GenBank/DDBJ databases">
        <title>Complete sequence of Synechococcus sp. PCC 7002.</title>
        <authorList>
            <person name="Li T."/>
            <person name="Zhao J."/>
            <person name="Zhao C."/>
            <person name="Liu Z."/>
            <person name="Zhao F."/>
            <person name="Marquardt J."/>
            <person name="Nomura C.T."/>
            <person name="Persson S."/>
            <person name="Detter J.C."/>
            <person name="Richardson P.M."/>
            <person name="Lanz C."/>
            <person name="Schuster S.C."/>
            <person name="Wang J."/>
            <person name="Li S."/>
            <person name="Huang X."/>
            <person name="Cai T."/>
            <person name="Yu Z."/>
            <person name="Luo J."/>
            <person name="Zhao J."/>
            <person name="Bryant D.A."/>
        </authorList>
    </citation>
    <scope>NUCLEOTIDE SEQUENCE [LARGE SCALE GENOMIC DNA]</scope>
    <source>
        <strain>ATCC 27264 / PCC 7002 / PR-6</strain>
    </source>
</reference>
<evidence type="ECO:0000255" key="1">
    <source>
        <dbReference type="HAMAP-Rule" id="MF_00379"/>
    </source>
</evidence>
<protein>
    <recommendedName>
        <fullName evidence="1">tRNA modification GTPase MnmE</fullName>
        <ecNumber evidence="1">3.6.-.-</ecNumber>
    </recommendedName>
</protein>
<sequence length="460" mass="49294">MNLGDTIVAIASAVVPNQGSIGIVRLSGAAALPIARQLFQDPGQQTWESHRILYGYVRHPQTQTIVDEALLLLMLAPRSFTAEDVVEFHCHGGIIPVQQVLQLCLGAGARLATPGEFTLRAFLNGRIDLTQAESVAELVGAKSPQSAQVALAGIQGKLAQPIQQLRGQCLDILAEVEARIDFEDDLPPLDEPQIQRDLTQVLEKVAQILQTSDRGELLRTGLKVAIVGRPNVGKSSLLNAWSRSDRAIVTDLPGTTRDVVESQLVVQGIPVQVLDTAGIRDTEDAVEKIGVARSLAASQQADLILFTIDAAVGWTAADQEIFQRIVATKANQPLILILNKIDIGQPEAIEIPPQVQGVVKTAAAQHQGVDELETAIANLVQAGKVGAADLDFAINQRQAAALAQAQQALIQVRETIAQGLPLDFWTIDLRSAIQALGEITGEGVTESVLDRIFSRFCIGK</sequence>
<keyword id="KW-0963">Cytoplasm</keyword>
<keyword id="KW-0342">GTP-binding</keyword>
<keyword id="KW-0378">Hydrolase</keyword>
<keyword id="KW-0460">Magnesium</keyword>
<keyword id="KW-0479">Metal-binding</keyword>
<keyword id="KW-0547">Nucleotide-binding</keyword>
<keyword id="KW-0630">Potassium</keyword>
<keyword id="KW-1185">Reference proteome</keyword>
<keyword id="KW-0819">tRNA processing</keyword>
<proteinExistence type="inferred from homology"/>
<accession>B1XKC3</accession>
<gene>
    <name evidence="1" type="primary">mnmE</name>
    <name evidence="1" type="synonym">trmE</name>
    <name type="ordered locus">SYNPCC7002_A1170</name>
</gene>
<name>MNME_PICP2</name>
<organism>
    <name type="scientific">Picosynechococcus sp. (strain ATCC 27264 / PCC 7002 / PR-6)</name>
    <name type="common">Agmenellum quadruplicatum</name>
    <dbReference type="NCBI Taxonomy" id="32049"/>
    <lineage>
        <taxon>Bacteria</taxon>
        <taxon>Bacillati</taxon>
        <taxon>Cyanobacteriota</taxon>
        <taxon>Cyanophyceae</taxon>
        <taxon>Oscillatoriophycideae</taxon>
        <taxon>Chroococcales</taxon>
        <taxon>Geminocystaceae</taxon>
        <taxon>Picosynechococcus</taxon>
    </lineage>
</organism>
<comment type="function">
    <text evidence="1">Exhibits a very high intrinsic GTPase hydrolysis rate. Involved in the addition of a carboxymethylaminomethyl (cmnm) group at the wobble position (U34) of certain tRNAs, forming tRNA-cmnm(5)s(2)U34.</text>
</comment>
<comment type="cofactor">
    <cofactor evidence="1">
        <name>K(+)</name>
        <dbReference type="ChEBI" id="CHEBI:29103"/>
    </cofactor>
    <text evidence="1">Binds 1 potassium ion per subunit.</text>
</comment>
<comment type="subunit">
    <text evidence="1">Homodimer. Heterotetramer of two MnmE and two MnmG subunits.</text>
</comment>
<comment type="subcellular location">
    <subcellularLocation>
        <location evidence="1">Cytoplasm</location>
    </subcellularLocation>
</comment>
<comment type="similarity">
    <text evidence="1">Belongs to the TRAFAC class TrmE-Era-EngA-EngB-Septin-like GTPase superfamily. TrmE GTPase family.</text>
</comment>
<dbReference type="EC" id="3.6.-.-" evidence="1"/>
<dbReference type="EMBL" id="CP000951">
    <property type="protein sequence ID" value="ACA99169.1"/>
    <property type="molecule type" value="Genomic_DNA"/>
</dbReference>
<dbReference type="RefSeq" id="WP_012306792.1">
    <property type="nucleotide sequence ID" value="NZ_JAHHPU010000001.1"/>
</dbReference>
<dbReference type="SMR" id="B1XKC3"/>
<dbReference type="STRING" id="32049.SYNPCC7002_A1170"/>
<dbReference type="KEGG" id="syp:SYNPCC7002_A1170"/>
<dbReference type="eggNOG" id="COG0486">
    <property type="taxonomic scope" value="Bacteria"/>
</dbReference>
<dbReference type="HOGENOM" id="CLU_019624_4_1_3"/>
<dbReference type="Proteomes" id="UP000001688">
    <property type="component" value="Chromosome"/>
</dbReference>
<dbReference type="GO" id="GO:0005829">
    <property type="term" value="C:cytosol"/>
    <property type="evidence" value="ECO:0007669"/>
    <property type="project" value="TreeGrafter"/>
</dbReference>
<dbReference type="GO" id="GO:0005525">
    <property type="term" value="F:GTP binding"/>
    <property type="evidence" value="ECO:0007669"/>
    <property type="project" value="UniProtKB-UniRule"/>
</dbReference>
<dbReference type="GO" id="GO:0003924">
    <property type="term" value="F:GTPase activity"/>
    <property type="evidence" value="ECO:0007669"/>
    <property type="project" value="UniProtKB-UniRule"/>
</dbReference>
<dbReference type="GO" id="GO:0046872">
    <property type="term" value="F:metal ion binding"/>
    <property type="evidence" value="ECO:0007669"/>
    <property type="project" value="UniProtKB-KW"/>
</dbReference>
<dbReference type="GO" id="GO:0030488">
    <property type="term" value="P:tRNA methylation"/>
    <property type="evidence" value="ECO:0007669"/>
    <property type="project" value="TreeGrafter"/>
</dbReference>
<dbReference type="GO" id="GO:0002098">
    <property type="term" value="P:tRNA wobble uridine modification"/>
    <property type="evidence" value="ECO:0007669"/>
    <property type="project" value="TreeGrafter"/>
</dbReference>
<dbReference type="CDD" id="cd04164">
    <property type="entry name" value="trmE"/>
    <property type="match status" value="1"/>
</dbReference>
<dbReference type="CDD" id="cd14858">
    <property type="entry name" value="TrmE_N"/>
    <property type="match status" value="1"/>
</dbReference>
<dbReference type="FunFam" id="3.30.1360.120:FF:000003">
    <property type="entry name" value="tRNA modification GTPase MnmE"/>
    <property type="match status" value="1"/>
</dbReference>
<dbReference type="FunFam" id="3.40.50.300:FF:000494">
    <property type="entry name" value="tRNA modification GTPase MnmE"/>
    <property type="match status" value="1"/>
</dbReference>
<dbReference type="Gene3D" id="3.40.50.300">
    <property type="entry name" value="P-loop containing nucleotide triphosphate hydrolases"/>
    <property type="match status" value="1"/>
</dbReference>
<dbReference type="Gene3D" id="3.30.1360.120">
    <property type="entry name" value="Probable tRNA modification gtpase trme, domain 1"/>
    <property type="match status" value="1"/>
</dbReference>
<dbReference type="Gene3D" id="1.20.120.430">
    <property type="entry name" value="tRNA modification GTPase MnmE domain 2"/>
    <property type="match status" value="1"/>
</dbReference>
<dbReference type="HAMAP" id="MF_00379">
    <property type="entry name" value="GTPase_MnmE"/>
    <property type="match status" value="1"/>
</dbReference>
<dbReference type="InterPro" id="IPR031168">
    <property type="entry name" value="G_TrmE"/>
</dbReference>
<dbReference type="InterPro" id="IPR006073">
    <property type="entry name" value="GTP-bd"/>
</dbReference>
<dbReference type="InterPro" id="IPR018948">
    <property type="entry name" value="GTP-bd_TrmE_N"/>
</dbReference>
<dbReference type="InterPro" id="IPR004520">
    <property type="entry name" value="GTPase_MnmE"/>
</dbReference>
<dbReference type="InterPro" id="IPR027368">
    <property type="entry name" value="MnmE_dom2"/>
</dbReference>
<dbReference type="InterPro" id="IPR025867">
    <property type="entry name" value="MnmE_helical"/>
</dbReference>
<dbReference type="InterPro" id="IPR027417">
    <property type="entry name" value="P-loop_NTPase"/>
</dbReference>
<dbReference type="InterPro" id="IPR005225">
    <property type="entry name" value="Small_GTP-bd"/>
</dbReference>
<dbReference type="InterPro" id="IPR027266">
    <property type="entry name" value="TrmE/GcvT_dom1"/>
</dbReference>
<dbReference type="NCBIfam" id="TIGR00450">
    <property type="entry name" value="mnmE_trmE_thdF"/>
    <property type="match status" value="1"/>
</dbReference>
<dbReference type="NCBIfam" id="NF003661">
    <property type="entry name" value="PRK05291.1-3"/>
    <property type="match status" value="1"/>
</dbReference>
<dbReference type="NCBIfam" id="TIGR00231">
    <property type="entry name" value="small_GTP"/>
    <property type="match status" value="1"/>
</dbReference>
<dbReference type="PANTHER" id="PTHR42714">
    <property type="entry name" value="TRNA MODIFICATION GTPASE GTPBP3"/>
    <property type="match status" value="1"/>
</dbReference>
<dbReference type="PANTHER" id="PTHR42714:SF2">
    <property type="entry name" value="TRNA MODIFICATION GTPASE GTPBP3, MITOCHONDRIAL"/>
    <property type="match status" value="1"/>
</dbReference>
<dbReference type="Pfam" id="PF01926">
    <property type="entry name" value="MMR_HSR1"/>
    <property type="match status" value="1"/>
</dbReference>
<dbReference type="Pfam" id="PF12631">
    <property type="entry name" value="MnmE_helical"/>
    <property type="match status" value="1"/>
</dbReference>
<dbReference type="Pfam" id="PF10396">
    <property type="entry name" value="TrmE_N"/>
    <property type="match status" value="1"/>
</dbReference>
<dbReference type="PRINTS" id="PR00326">
    <property type="entry name" value="GTP1OBG"/>
</dbReference>
<dbReference type="SUPFAM" id="SSF52540">
    <property type="entry name" value="P-loop containing nucleoside triphosphate hydrolases"/>
    <property type="match status" value="1"/>
</dbReference>
<dbReference type="SUPFAM" id="SSF116878">
    <property type="entry name" value="TrmE connector domain"/>
    <property type="match status" value="1"/>
</dbReference>
<dbReference type="PROSITE" id="PS51709">
    <property type="entry name" value="G_TRME"/>
    <property type="match status" value="1"/>
</dbReference>